<proteinExistence type="evidence at protein level"/>
<protein>
    <recommendedName>
        <fullName>Frizzled-1</fullName>
        <shortName>Fz-1</shortName>
        <shortName>rFz1</shortName>
    </recommendedName>
</protein>
<dbReference type="EMBL" id="L02529">
    <property type="protein sequence ID" value="AAA41173.1"/>
    <property type="molecule type" value="mRNA"/>
</dbReference>
<dbReference type="PIR" id="A45054">
    <property type="entry name" value="A45054"/>
</dbReference>
<dbReference type="SMR" id="Q08463"/>
<dbReference type="FunCoup" id="Q08463">
    <property type="interactions" value="1394"/>
</dbReference>
<dbReference type="IntAct" id="Q08463">
    <property type="interactions" value="1"/>
</dbReference>
<dbReference type="STRING" id="10116.ENSRNOP00000021979"/>
<dbReference type="ChEMBL" id="CHEMBL4879454"/>
<dbReference type="GlyCosmos" id="Q08463">
    <property type="glycosylation" value="2 sites, No reported glycans"/>
</dbReference>
<dbReference type="GlyGen" id="Q08463">
    <property type="glycosylation" value="3 sites"/>
</dbReference>
<dbReference type="PhosphoSitePlus" id="Q08463"/>
<dbReference type="PaxDb" id="10116-ENSRNOP00000021979"/>
<dbReference type="UCSC" id="RGD:61916">
    <property type="organism name" value="rat"/>
</dbReference>
<dbReference type="AGR" id="RGD:61916"/>
<dbReference type="RGD" id="61916">
    <property type="gene designation" value="Fzd1"/>
</dbReference>
<dbReference type="eggNOG" id="KOG3577">
    <property type="taxonomic scope" value="Eukaryota"/>
</dbReference>
<dbReference type="InParanoid" id="Q08463"/>
<dbReference type="PhylomeDB" id="Q08463"/>
<dbReference type="Reactome" id="R-RNO-4086400">
    <property type="pathway name" value="PCP/CE pathway"/>
</dbReference>
<dbReference type="Reactome" id="R-RNO-4608870">
    <property type="pathway name" value="Asymmetric localization of PCP proteins"/>
</dbReference>
<dbReference type="Reactome" id="R-RNO-4641262">
    <property type="pathway name" value="Disassembly of the destruction complex and recruitment of AXIN to the membrane"/>
</dbReference>
<dbReference type="PRO" id="PR:Q08463"/>
<dbReference type="Proteomes" id="UP000002494">
    <property type="component" value="Unplaced"/>
</dbReference>
<dbReference type="GO" id="GO:0009986">
    <property type="term" value="C:cell surface"/>
    <property type="evidence" value="ECO:0000266"/>
    <property type="project" value="RGD"/>
</dbReference>
<dbReference type="GO" id="GO:0005886">
    <property type="term" value="C:plasma membrane"/>
    <property type="evidence" value="ECO:0000314"/>
    <property type="project" value="BHF-UCL"/>
</dbReference>
<dbReference type="GO" id="GO:0005109">
    <property type="term" value="F:frizzled binding"/>
    <property type="evidence" value="ECO:0000266"/>
    <property type="project" value="RGD"/>
</dbReference>
<dbReference type="GO" id="GO:0004930">
    <property type="term" value="F:G protein-coupled receptor activity"/>
    <property type="evidence" value="ECO:0007669"/>
    <property type="project" value="UniProtKB-KW"/>
</dbReference>
<dbReference type="GO" id="GO:0042802">
    <property type="term" value="F:identical protein binding"/>
    <property type="evidence" value="ECO:0000353"/>
    <property type="project" value="IntAct"/>
</dbReference>
<dbReference type="GO" id="GO:0030165">
    <property type="term" value="F:PDZ domain binding"/>
    <property type="evidence" value="ECO:0000266"/>
    <property type="project" value="RGD"/>
</dbReference>
<dbReference type="GO" id="GO:0046982">
    <property type="term" value="F:protein heterodimerization activity"/>
    <property type="evidence" value="ECO:0000353"/>
    <property type="project" value="BHF-UCL"/>
</dbReference>
<dbReference type="GO" id="GO:0042803">
    <property type="term" value="F:protein homodimerization activity"/>
    <property type="evidence" value="ECO:0000353"/>
    <property type="project" value="BHF-UCL"/>
</dbReference>
<dbReference type="GO" id="GO:0005102">
    <property type="term" value="F:signaling receptor binding"/>
    <property type="evidence" value="ECO:0000266"/>
    <property type="project" value="RGD"/>
</dbReference>
<dbReference type="GO" id="GO:0042813">
    <property type="term" value="F:Wnt receptor activity"/>
    <property type="evidence" value="ECO:0000266"/>
    <property type="project" value="RGD"/>
</dbReference>
<dbReference type="GO" id="GO:0017147">
    <property type="term" value="F:Wnt-protein binding"/>
    <property type="evidence" value="ECO:0000266"/>
    <property type="project" value="RGD"/>
</dbReference>
<dbReference type="GO" id="GO:0036520">
    <property type="term" value="P:astrocyte-dopaminergic neuron signaling"/>
    <property type="evidence" value="ECO:0000266"/>
    <property type="project" value="RGD"/>
</dbReference>
<dbReference type="GO" id="GO:0035425">
    <property type="term" value="P:autocrine signaling"/>
    <property type="evidence" value="ECO:0000266"/>
    <property type="project" value="RGD"/>
</dbReference>
<dbReference type="GO" id="GO:0060070">
    <property type="term" value="P:canonical Wnt signaling pathway"/>
    <property type="evidence" value="ECO:0000314"/>
    <property type="project" value="BHF-UCL"/>
</dbReference>
<dbReference type="GO" id="GO:0007267">
    <property type="term" value="P:cell-cell signaling"/>
    <property type="evidence" value="ECO:0000266"/>
    <property type="project" value="RGD"/>
</dbReference>
<dbReference type="GO" id="GO:0071363">
    <property type="term" value="P:cellular response to growth factor stimulus"/>
    <property type="evidence" value="ECO:0000270"/>
    <property type="project" value="RGD"/>
</dbReference>
<dbReference type="GO" id="GO:0071375">
    <property type="term" value="P:cellular response to peptide hormone stimulus"/>
    <property type="evidence" value="ECO:0000270"/>
    <property type="project" value="RGD"/>
</dbReference>
<dbReference type="GO" id="GO:0071305">
    <property type="term" value="P:cellular response to vitamin D"/>
    <property type="evidence" value="ECO:0000270"/>
    <property type="project" value="RGD"/>
</dbReference>
<dbReference type="GO" id="GO:0045446">
    <property type="term" value="P:endothelial cell differentiation"/>
    <property type="evidence" value="ECO:0000266"/>
    <property type="project" value="RGD"/>
</dbReference>
<dbReference type="GO" id="GO:0060022">
    <property type="term" value="P:hard palate development"/>
    <property type="evidence" value="ECO:0000266"/>
    <property type="project" value="RGD"/>
</dbReference>
<dbReference type="GO" id="GO:0048286">
    <property type="term" value="P:lung alveolus development"/>
    <property type="evidence" value="ECO:0000270"/>
    <property type="project" value="RGD"/>
</dbReference>
<dbReference type="GO" id="GO:0003149">
    <property type="term" value="P:membranous septum morphogenesis"/>
    <property type="evidence" value="ECO:0000266"/>
    <property type="project" value="RGD"/>
</dbReference>
<dbReference type="GO" id="GO:0003150">
    <property type="term" value="P:muscular septum morphogenesis"/>
    <property type="evidence" value="ECO:0000266"/>
    <property type="project" value="RGD"/>
</dbReference>
<dbReference type="GO" id="GO:0030514">
    <property type="term" value="P:negative regulation of BMP signaling pathway"/>
    <property type="evidence" value="ECO:0000266"/>
    <property type="project" value="RGD"/>
</dbReference>
<dbReference type="GO" id="GO:0090090">
    <property type="term" value="P:negative regulation of canonical Wnt signaling pathway"/>
    <property type="evidence" value="ECO:0000266"/>
    <property type="project" value="RGD"/>
</dbReference>
<dbReference type="GO" id="GO:0045892">
    <property type="term" value="P:negative regulation of DNA-templated transcription"/>
    <property type="evidence" value="ECO:0000266"/>
    <property type="project" value="RGD"/>
</dbReference>
<dbReference type="GO" id="GO:1903377">
    <property type="term" value="P:negative regulation of oxidative stress-induced neuron intrinsic apoptotic signaling pathway"/>
    <property type="evidence" value="ECO:0000266"/>
    <property type="project" value="RGD"/>
</dbReference>
<dbReference type="GO" id="GO:0035567">
    <property type="term" value="P:non-canonical Wnt signaling pathway"/>
    <property type="evidence" value="ECO:0000318"/>
    <property type="project" value="GO_Central"/>
</dbReference>
<dbReference type="GO" id="GO:0003151">
    <property type="term" value="P:outflow tract morphogenesis"/>
    <property type="evidence" value="ECO:0000266"/>
    <property type="project" value="RGD"/>
</dbReference>
<dbReference type="GO" id="GO:0045893">
    <property type="term" value="P:positive regulation of DNA-templated transcription"/>
    <property type="evidence" value="ECO:0000266"/>
    <property type="project" value="RGD"/>
</dbReference>
<dbReference type="GO" id="GO:0010976">
    <property type="term" value="P:positive regulation of neuron projection development"/>
    <property type="evidence" value="ECO:0000314"/>
    <property type="project" value="ParkinsonsUK-UCL"/>
</dbReference>
<dbReference type="GO" id="GO:0045669">
    <property type="term" value="P:positive regulation of osteoblast differentiation"/>
    <property type="evidence" value="ECO:0000266"/>
    <property type="project" value="RGD"/>
</dbReference>
<dbReference type="GO" id="GO:0045944">
    <property type="term" value="P:positive regulation of transcription by RNA polymerase II"/>
    <property type="evidence" value="ECO:0000314"/>
    <property type="project" value="BHF-UCL"/>
</dbReference>
<dbReference type="GO" id="GO:2000739">
    <property type="term" value="P:regulation of mesenchymal stem cell differentiation"/>
    <property type="evidence" value="ECO:0000266"/>
    <property type="project" value="RGD"/>
</dbReference>
<dbReference type="GO" id="GO:0045667">
    <property type="term" value="P:regulation of osteoblast differentiation"/>
    <property type="evidence" value="ECO:0000270"/>
    <property type="project" value="RGD"/>
</dbReference>
<dbReference type="GO" id="GO:1905606">
    <property type="term" value="P:regulation of presynapse assembly"/>
    <property type="evidence" value="ECO:0000266"/>
    <property type="project" value="RGD"/>
</dbReference>
<dbReference type="GO" id="GO:0009410">
    <property type="term" value="P:response to xenobiotic stimulus"/>
    <property type="evidence" value="ECO:0000266"/>
    <property type="project" value="RGD"/>
</dbReference>
<dbReference type="GO" id="GO:0060412">
    <property type="term" value="P:ventricular septum morphogenesis"/>
    <property type="evidence" value="ECO:0000266"/>
    <property type="project" value="RGD"/>
</dbReference>
<dbReference type="GO" id="GO:0016055">
    <property type="term" value="P:Wnt signaling pathway"/>
    <property type="evidence" value="ECO:0000314"/>
    <property type="project" value="RGD"/>
</dbReference>
<dbReference type="CDD" id="cd15247">
    <property type="entry name" value="7tmF_FZD1"/>
    <property type="match status" value="1"/>
</dbReference>
<dbReference type="FunFam" id="1.10.2000.10:FF:000003">
    <property type="entry name" value="Frizzled class receptor 2"/>
    <property type="match status" value="1"/>
</dbReference>
<dbReference type="FunFam" id="1.20.1070.10:FF:000029">
    <property type="entry name" value="Frizzled class receptor 2"/>
    <property type="match status" value="1"/>
</dbReference>
<dbReference type="Gene3D" id="1.10.2000.10">
    <property type="entry name" value="Frizzled cysteine-rich domain"/>
    <property type="match status" value="1"/>
</dbReference>
<dbReference type="Gene3D" id="1.20.1070.10">
    <property type="entry name" value="Rhodopsin 7-helix transmembrane proteins"/>
    <property type="match status" value="1"/>
</dbReference>
<dbReference type="InterPro" id="IPR015526">
    <property type="entry name" value="Frizzled/SFRP"/>
</dbReference>
<dbReference type="InterPro" id="IPR000539">
    <property type="entry name" value="Frizzled/Smoothened_7TM"/>
</dbReference>
<dbReference type="InterPro" id="IPR020067">
    <property type="entry name" value="Frizzled_dom"/>
</dbReference>
<dbReference type="InterPro" id="IPR036790">
    <property type="entry name" value="Frizzled_dom_sf"/>
</dbReference>
<dbReference type="InterPro" id="IPR017981">
    <property type="entry name" value="GPCR_2-like_7TM"/>
</dbReference>
<dbReference type="PANTHER" id="PTHR11309">
    <property type="entry name" value="FRIZZLED"/>
    <property type="match status" value="1"/>
</dbReference>
<dbReference type="PANTHER" id="PTHR11309:SF81">
    <property type="entry name" value="FRIZZLED-1"/>
    <property type="match status" value="1"/>
</dbReference>
<dbReference type="Pfam" id="PF01534">
    <property type="entry name" value="Frizzled"/>
    <property type="match status" value="1"/>
</dbReference>
<dbReference type="Pfam" id="PF01392">
    <property type="entry name" value="Fz"/>
    <property type="match status" value="1"/>
</dbReference>
<dbReference type="PRINTS" id="PR00489">
    <property type="entry name" value="FRIZZLED"/>
</dbReference>
<dbReference type="SMART" id="SM00063">
    <property type="entry name" value="FRI"/>
    <property type="match status" value="1"/>
</dbReference>
<dbReference type="SMART" id="SM01330">
    <property type="entry name" value="Frizzled"/>
    <property type="match status" value="1"/>
</dbReference>
<dbReference type="SUPFAM" id="SSF63501">
    <property type="entry name" value="Frizzled cysteine-rich domain"/>
    <property type="match status" value="1"/>
</dbReference>
<dbReference type="PROSITE" id="PS50038">
    <property type="entry name" value="FZ"/>
    <property type="match status" value="1"/>
</dbReference>
<dbReference type="PROSITE" id="PS50261">
    <property type="entry name" value="G_PROTEIN_RECEP_F2_4"/>
    <property type="match status" value="1"/>
</dbReference>
<organism>
    <name type="scientific">Rattus norvegicus</name>
    <name type="common">Rat</name>
    <dbReference type="NCBI Taxonomy" id="10116"/>
    <lineage>
        <taxon>Eukaryota</taxon>
        <taxon>Metazoa</taxon>
        <taxon>Chordata</taxon>
        <taxon>Craniata</taxon>
        <taxon>Vertebrata</taxon>
        <taxon>Euteleostomi</taxon>
        <taxon>Mammalia</taxon>
        <taxon>Eutheria</taxon>
        <taxon>Euarchontoglires</taxon>
        <taxon>Glires</taxon>
        <taxon>Rodentia</taxon>
        <taxon>Myomorpha</taxon>
        <taxon>Muroidea</taxon>
        <taxon>Muridae</taxon>
        <taxon>Murinae</taxon>
        <taxon>Rattus</taxon>
    </lineage>
</organism>
<name>FZD1_RAT</name>
<keyword id="KW-1003">Cell membrane</keyword>
<keyword id="KW-0217">Developmental protein</keyword>
<keyword id="KW-1015">Disulfide bond</keyword>
<keyword id="KW-0297">G-protein coupled receptor</keyword>
<keyword id="KW-0325">Glycoprotein</keyword>
<keyword id="KW-0472">Membrane</keyword>
<keyword id="KW-0675">Receptor</keyword>
<keyword id="KW-1185">Reference proteome</keyword>
<keyword id="KW-0732">Signal</keyword>
<keyword id="KW-0807">Transducer</keyword>
<keyword id="KW-0812">Transmembrane</keyword>
<keyword id="KW-1133">Transmembrane helix</keyword>
<keyword id="KW-0832">Ubl conjugation</keyword>
<keyword id="KW-0879">Wnt signaling pathway</keyword>
<evidence type="ECO:0000250" key="1"/>
<evidence type="ECO:0000250" key="2">
    <source>
        <dbReference type="UniProtKB" id="O70421"/>
    </source>
</evidence>
<evidence type="ECO:0000250" key="3">
    <source>
        <dbReference type="UniProtKB" id="Q9UP38"/>
    </source>
</evidence>
<evidence type="ECO:0000255" key="4"/>
<evidence type="ECO:0000255" key="5">
    <source>
        <dbReference type="PROSITE-ProRule" id="PRU00090"/>
    </source>
</evidence>
<evidence type="ECO:0000256" key="6">
    <source>
        <dbReference type="SAM" id="MobiDB-lite"/>
    </source>
</evidence>
<evidence type="ECO:0000269" key="7">
    <source>
    </source>
</evidence>
<evidence type="ECO:0000305" key="8"/>
<reference key="1">
    <citation type="journal article" date="1992" name="J. Biol. Chem.">
        <title>Two homologs of the Drosophila polarity gene frizzled (fz) are widely expressed in mammalian tissues.</title>
        <authorList>
            <person name="Chan S.D.H."/>
            <person name="Karpf D.B."/>
            <person name="Fowlkes M.E."/>
            <person name="Hooks M."/>
            <person name="Bradley M.S."/>
            <person name="Vuong V."/>
            <person name="Bambino T."/>
            <person name="Liu M.Y.C."/>
            <person name="Arnaud C.D."/>
            <person name="Strewler G.J."/>
            <person name="Nissenson R.A."/>
        </authorList>
    </citation>
    <scope>NUCLEOTIDE SEQUENCE [MRNA]</scope>
    <source>
        <strain>Sprague-Dawley</strain>
        <tissue>Osteosarcoma</tissue>
    </source>
</reference>
<reference key="2">
    <citation type="journal article" date="1999" name="Curr. Biol.">
        <title>Protein kinase C is differentially stimulated by Wnt and Frizzled homologs in a G-protein-dependent manner.</title>
        <authorList>
            <person name="Sheldahl L.C."/>
            <person name="Park M."/>
            <person name="Malbon C.C."/>
            <person name="Moon R.T."/>
        </authorList>
    </citation>
    <scope>COUPLING TO BETA-CATENIN PATHWAY</scope>
</reference>
<gene>
    <name type="primary">Fzd1</name>
</gene>
<sequence>MAEEAVPSESRAAGRPSLELCAVALPGRREEVGHQDTAGHRRPRAHSRCWARGLLLLLWLLEAPLLLGVRAQPAGQVSGPGQQRPPPPQPQQGGQQYNGERGISIPDHGYCQPISIPLCTDIAYNQTIMPNLLGHTNQEDAGLEVHQFYPLVKVQCSAELKFFLCSMYAPVCTVLEQALPPCRSLCERAQGCEALMNKFGFQWPDTLKCEKFPVHGAGELCVGQNTSDKGTPTPSLLPEFWTSNPQHGGGGYRGGYPGGAGPVERGKFSCPRALRVPSYLNYHFLGEKDCGAPCEPTKVYGLMYFGPEELRFSRTWIGIWSVLCCASTLFTVLTYLVDMRRFSYPERPIIFLSGCYTAVAVAYIAGFLLEDRVVCNDKFAEDGARTVAQGTKKEGCTILFMMLYFFSMASSIWWVILSLTWFLAAGMKWGHEAIEANSQYFHLAAWAVPAIKTITILALGQVDGDVLSGVCFVGLNNVDALRGFVLAPLFVYLFIGTSFLLAGFVSLFRIRTIMKHDGTKTEKLEKLMVRIGVFSVLYTVPATIVIACYFYEQAFRDQWERSWVAQSCKSYAIPCPHLQGGGGVPPHPPMSPDFTVFMIKYLMTLIVGITSGFWIWSGKTLNSWRKFYTRLTNSKQGETTV</sequence>
<accession>Q08463</accession>
<comment type="function">
    <text evidence="2 3 8">Receptor for Wnt proteins. Activated by WNT3A, WNT3, WNT1 and to a lesser extent WNT2, but apparently not by WNT4, WNT5A, WNT5B, WNT6 or WNT7A. Contradictory results have been reported for activation by WNT7B. Functions in the canonical Wnt/beta-catenin signaling pathway. The canonical Wnt/beta-catenin signaling pathway leads to the activation of disheveled proteins, inhibition of GSK-3 kinase, nuclear accumulation of beta-catenin and activation of Wnt target genes (By similarity). A second signaling pathway involving PKC and calcium fluxes has been seen for some family members, but it is not yet clear if it represents a distinct pathway or if it can be integrated in the canonical pathway, as PKC seems to be required for Wnt-mediated inactivation of GSK-3 kinase. Both pathways seem to involve interactions with G-proteins. May be involved in transduction and intercellular transmission of polarity information during tissue morphogenesis and/or in differentiated tissues (Probable).</text>
</comment>
<comment type="subunit">
    <text evidence="2 3">Interacts with MYOC (By similarity). Interacts with WNT7B (By similarity).</text>
</comment>
<comment type="interaction">
    <interactant intactId="EBI-8766455">
        <id>Q08463</id>
    </interactant>
    <interactant intactId="EBI-8766455">
        <id>Q08463</id>
        <label>Fzd1</label>
    </interactant>
    <organismsDiffer>false</organismsDiffer>
    <experiments>4</experiments>
</comment>
<comment type="interaction">
    <interactant intactId="EBI-8766455">
        <id>Q08463</id>
    </interactant>
    <interactant intactId="EBI-7402050">
        <id>Q08464</id>
        <label>Fzd2</label>
    </interactant>
    <organismsDiffer>false</organismsDiffer>
    <experiments>6</experiments>
</comment>
<comment type="subcellular location">
    <subcellularLocation>
        <location evidence="3">Cell membrane</location>
        <topology evidence="4">Multi-pass membrane protein</topology>
    </subcellularLocation>
</comment>
<comment type="tissue specificity">
    <text evidence="7">Widely expressed. Most abundant in kidney, liver, uterus, ovary and heart. Lower levels seen in brain and intestine. Extremely low in calvaria, mammary glands and testis.</text>
</comment>
<comment type="developmental stage">
    <text>Expressed predominantly in neonatal tissues, at lower levels in adult.</text>
</comment>
<comment type="domain">
    <text evidence="1">Lys-Thr-X-X-X-Trp motif interacts with the PDZ domain of Dvl (Disheveled) family members and is involved in the activation of the Wnt/beta-catenin signaling pathway.</text>
</comment>
<comment type="domain">
    <text evidence="1">The FZ domain is involved in binding with Wnt ligands.</text>
</comment>
<comment type="PTM">
    <text evidence="1">Ubiquitinated by ZNRF3, leading to its degradation by the proteasome.</text>
</comment>
<comment type="similarity">
    <text evidence="8">Belongs to the G-protein coupled receptor Fz/Smo family.</text>
</comment>
<comment type="caution">
    <text evidence="8">Activation by specific Wnt family members may depend on the cells used for the experiment. Contradictory results have been reported for activation by WNT7B in human and mouse.</text>
</comment>
<feature type="signal peptide" evidence="4">
    <location>
        <begin position="1"/>
        <end position="68"/>
    </location>
</feature>
<feature type="chain" id="PRO_0000012975" description="Frizzled-1">
    <location>
        <begin position="69"/>
        <end position="641"/>
    </location>
</feature>
<feature type="topological domain" description="Extracellular" evidence="4">
    <location>
        <begin position="69"/>
        <end position="316"/>
    </location>
</feature>
<feature type="transmembrane region" description="Helical; Name=1" evidence="4">
    <location>
        <begin position="317"/>
        <end position="337"/>
    </location>
</feature>
<feature type="topological domain" description="Cytoplasmic" evidence="4">
    <location>
        <begin position="338"/>
        <end position="348"/>
    </location>
</feature>
<feature type="transmembrane region" description="Helical; Name=2" evidence="4">
    <location>
        <begin position="349"/>
        <end position="369"/>
    </location>
</feature>
<feature type="topological domain" description="Extracellular" evidence="4">
    <location>
        <begin position="370"/>
        <end position="396"/>
    </location>
</feature>
<feature type="transmembrane region" description="Helical; Name=3" evidence="4">
    <location>
        <begin position="397"/>
        <end position="417"/>
    </location>
</feature>
<feature type="topological domain" description="Cytoplasmic" evidence="4">
    <location>
        <begin position="418"/>
        <end position="439"/>
    </location>
</feature>
<feature type="transmembrane region" description="Helical; Name=4" evidence="4">
    <location>
        <begin position="440"/>
        <end position="460"/>
    </location>
</feature>
<feature type="topological domain" description="Extracellular" evidence="4">
    <location>
        <begin position="461"/>
        <end position="483"/>
    </location>
</feature>
<feature type="transmembrane region" description="Helical; Name=5" evidence="4">
    <location>
        <begin position="484"/>
        <end position="504"/>
    </location>
</feature>
<feature type="topological domain" description="Cytoplasmic" evidence="4">
    <location>
        <begin position="505"/>
        <end position="530"/>
    </location>
</feature>
<feature type="transmembrane region" description="Helical; Name=6" evidence="4">
    <location>
        <begin position="531"/>
        <end position="551"/>
    </location>
</feature>
<feature type="topological domain" description="Extracellular" evidence="4">
    <location>
        <begin position="552"/>
        <end position="595"/>
    </location>
</feature>
<feature type="transmembrane region" description="Helical; Name=7" evidence="4">
    <location>
        <begin position="596"/>
        <end position="616"/>
    </location>
</feature>
<feature type="topological domain" description="Cytoplasmic" evidence="4">
    <location>
        <begin position="617"/>
        <end position="641"/>
    </location>
</feature>
<feature type="domain" description="FZ" evidence="5">
    <location>
        <begin position="106"/>
        <end position="224"/>
    </location>
</feature>
<feature type="region of interest" description="Disordered" evidence="6">
    <location>
        <begin position="74"/>
        <end position="99"/>
    </location>
</feature>
<feature type="short sequence motif" description="Lys-Thr-X-X-X-Trp motif, mediates interaction with the PDZ domain of Dvl family members" evidence="1">
    <location>
        <begin position="619"/>
        <end position="624"/>
    </location>
</feature>
<feature type="short sequence motif" description="PDZ-binding">
    <location>
        <begin position="639"/>
        <end position="641"/>
    </location>
</feature>
<feature type="glycosylation site" description="N-linked (GlcNAc...) asparagine" evidence="4">
    <location>
        <position position="125"/>
    </location>
</feature>
<feature type="glycosylation site" description="N-linked (GlcNAc...) asparagine" evidence="4">
    <location>
        <position position="225"/>
    </location>
</feature>
<feature type="disulfide bond" evidence="5">
    <location>
        <begin position="111"/>
        <end position="172"/>
    </location>
</feature>
<feature type="disulfide bond" evidence="5">
    <location>
        <begin position="119"/>
        <end position="165"/>
    </location>
</feature>
<feature type="disulfide bond" evidence="5">
    <location>
        <begin position="156"/>
        <end position="192"/>
    </location>
</feature>
<feature type="disulfide bond" evidence="5">
    <location>
        <begin position="182"/>
        <end position="221"/>
    </location>
</feature>
<feature type="disulfide bond" evidence="5">
    <location>
        <begin position="186"/>
        <end position="209"/>
    </location>
</feature>